<organism>
    <name type="scientific">Pinus uncinata</name>
    <name type="common">Mountain pine</name>
    <name type="synonym">Pinus mugo subsp. uncinata</name>
    <dbReference type="NCBI Taxonomy" id="38864"/>
    <lineage>
        <taxon>Eukaryota</taxon>
        <taxon>Viridiplantae</taxon>
        <taxon>Streptophyta</taxon>
        <taxon>Embryophyta</taxon>
        <taxon>Tracheophyta</taxon>
        <taxon>Spermatophyta</taxon>
        <taxon>Pinopsida</taxon>
        <taxon>Pinidae</taxon>
        <taxon>Conifers I</taxon>
        <taxon>Pinales</taxon>
        <taxon>Pinaceae</taxon>
        <taxon>Pinus</taxon>
        <taxon>Pinus subgen. Pinus</taxon>
    </lineage>
</organism>
<comment type="function">
    <text evidence="1">Usually encoded in the trnK tRNA gene intron. Probably assists in splicing its own and other chloroplast group II introns.</text>
</comment>
<comment type="subcellular location">
    <subcellularLocation>
        <location>Plastid</location>
        <location>Chloroplast</location>
    </subcellularLocation>
</comment>
<comment type="similarity">
    <text evidence="1">Belongs to the intron maturase 2 family. MatK subfamily.</text>
</comment>
<feature type="chain" id="PRO_0000143636" description="Maturase K">
    <location>
        <begin position="1"/>
        <end position="515"/>
    </location>
</feature>
<name>MATK_PINUN</name>
<dbReference type="EMBL" id="AB097778">
    <property type="protein sequence ID" value="BAC77421.1"/>
    <property type="molecule type" value="Genomic_DNA"/>
</dbReference>
<dbReference type="GO" id="GO:0009507">
    <property type="term" value="C:chloroplast"/>
    <property type="evidence" value="ECO:0007669"/>
    <property type="project" value="UniProtKB-SubCell"/>
</dbReference>
<dbReference type="GO" id="GO:0003723">
    <property type="term" value="F:RNA binding"/>
    <property type="evidence" value="ECO:0007669"/>
    <property type="project" value="UniProtKB-KW"/>
</dbReference>
<dbReference type="GO" id="GO:0006397">
    <property type="term" value="P:mRNA processing"/>
    <property type="evidence" value="ECO:0007669"/>
    <property type="project" value="UniProtKB-KW"/>
</dbReference>
<dbReference type="GO" id="GO:0008380">
    <property type="term" value="P:RNA splicing"/>
    <property type="evidence" value="ECO:0007669"/>
    <property type="project" value="UniProtKB-UniRule"/>
</dbReference>
<dbReference type="GO" id="GO:0008033">
    <property type="term" value="P:tRNA processing"/>
    <property type="evidence" value="ECO:0007669"/>
    <property type="project" value="UniProtKB-KW"/>
</dbReference>
<dbReference type="HAMAP" id="MF_01390">
    <property type="entry name" value="MatK"/>
    <property type="match status" value="1"/>
</dbReference>
<dbReference type="InterPro" id="IPR024937">
    <property type="entry name" value="Domain_X"/>
</dbReference>
<dbReference type="InterPro" id="IPR002866">
    <property type="entry name" value="Maturase_MatK"/>
</dbReference>
<dbReference type="InterPro" id="IPR024942">
    <property type="entry name" value="Maturase_MatK_N"/>
</dbReference>
<dbReference type="PANTHER" id="PTHR34811">
    <property type="entry name" value="MATURASE K"/>
    <property type="match status" value="1"/>
</dbReference>
<dbReference type="PANTHER" id="PTHR34811:SF1">
    <property type="entry name" value="MATURASE K"/>
    <property type="match status" value="1"/>
</dbReference>
<dbReference type="Pfam" id="PF01348">
    <property type="entry name" value="Intron_maturas2"/>
    <property type="match status" value="1"/>
</dbReference>
<dbReference type="Pfam" id="PF01824">
    <property type="entry name" value="MatK_N"/>
    <property type="match status" value="1"/>
</dbReference>
<reference key="1">
    <citation type="submission" date="2002-12" db="EMBL/GenBank/DDBJ databases">
        <title>Evolutionary relationships in pines.</title>
        <authorList>
            <person name="Geada-Lopez G."/>
            <person name="Harada K."/>
        </authorList>
    </citation>
    <scope>NUCLEOTIDE SEQUENCE [GENOMIC DNA]</scope>
</reference>
<geneLocation type="chloroplast"/>
<sequence length="515" mass="60753">MDEFHRCGKEDSFWQQCFLYPLFFQEDLYAISHDHYLDVSSSSRPMEHLSSNDQLSFLTVKRLIGQIRQQNHSIVLFVNCDPNPLADRKKSFYSESVLEALTLVLEVPFSIWSKSSVEGMNECKSFRSIHSIFPFLEDKFPHSNSILDARIPYSIHPEILVRTFRRWIRDAPSLHPLRSVLYDYRNSPENLQRSIIVVPRVNTRFFLFLLNYYVCECESILFSRLKRSSHSRSLSHGSFPQRTHFHRSIKHIIIFSRRNSLKSIWSLKDPKIHYVRYGERPIIAIKGADLLVKKCRYYLLIFRQFYFHLWSEPYRVCSHQLSKNCSSSPGYFLRVRMNPLLVRTKTLDELFIPVLITNEMDPIVPIVPIIGLLATEKFCDISGRPISKLSWTSLTDDDILDRFDQIWRNLFHYYSGSFDRDGLYRIKYILLLSCAKTLACKHKSTIRVVRKELGPELFKKSFSKEREFDSLPFSSKAAARSQRERIWHSDIPQINPLANSWQKIQDLKIENLFDQ</sequence>
<protein>
    <recommendedName>
        <fullName evidence="1">Maturase K</fullName>
    </recommendedName>
    <alternativeName>
        <fullName evidence="1">Intron maturase</fullName>
    </alternativeName>
</protein>
<accession>Q7YMG2</accession>
<evidence type="ECO:0000255" key="1">
    <source>
        <dbReference type="HAMAP-Rule" id="MF_01390"/>
    </source>
</evidence>
<gene>
    <name evidence="1" type="primary">matK</name>
</gene>
<keyword id="KW-0150">Chloroplast</keyword>
<keyword id="KW-0507">mRNA processing</keyword>
<keyword id="KW-0934">Plastid</keyword>
<keyword id="KW-0694">RNA-binding</keyword>
<keyword id="KW-0819">tRNA processing</keyword>
<proteinExistence type="inferred from homology"/>